<gene>
    <name evidence="1" type="primary">hsaF</name>
    <name type="ordered locus">BQ2027_MB3564C</name>
</gene>
<evidence type="ECO:0000250" key="1">
    <source>
        <dbReference type="UniProtKB" id="P9WMK5"/>
    </source>
</evidence>
<evidence type="ECO:0000255" key="2">
    <source>
        <dbReference type="HAMAP-Rule" id="MF_01656"/>
    </source>
</evidence>
<comment type="function">
    <text evidence="1">Involved in cholesterol degradation. Catalyzes the retro-aldol cleavage of 4-hydroxy-2-oxohexanoate (HOHA) to pyruvate and propanal. Can also catalyze the cleavage of 4-hydroxy-2-oxopentanoate (HOPA) to pyruvate and acetaldehyde. The aldehydes produced by this reaction are directly channeled to the dehydrogenase HsaG.</text>
</comment>
<comment type="catalytic activity">
    <reaction evidence="1">
        <text>(S)-4-hydroxy-2-oxohexanoate = propanal + pyruvate</text>
        <dbReference type="Rhea" id="RHEA:36003"/>
        <dbReference type="ChEBI" id="CHEBI:15361"/>
        <dbReference type="ChEBI" id="CHEBI:17153"/>
        <dbReference type="ChEBI" id="CHEBI:73142"/>
        <dbReference type="EC" id="4.1.3.43"/>
    </reaction>
    <physiologicalReaction direction="left-to-right" evidence="1">
        <dbReference type="Rhea" id="RHEA:36004"/>
    </physiologicalReaction>
</comment>
<comment type="catalytic activity">
    <reaction evidence="2">
        <text>(S)-4-hydroxy-2-oxopentanoate = acetaldehyde + pyruvate</text>
        <dbReference type="Rhea" id="RHEA:22624"/>
        <dbReference type="ChEBI" id="CHEBI:15343"/>
        <dbReference type="ChEBI" id="CHEBI:15361"/>
        <dbReference type="ChEBI" id="CHEBI:73143"/>
        <dbReference type="EC" id="4.1.3.39"/>
    </reaction>
    <physiologicalReaction direction="left-to-right" evidence="1">
        <dbReference type="Rhea" id="RHEA:22625"/>
    </physiologicalReaction>
</comment>
<comment type="cofactor">
    <cofactor evidence="1">
        <name>Mn(2+)</name>
        <dbReference type="ChEBI" id="CHEBI:29035"/>
    </cofactor>
</comment>
<comment type="subunit">
    <text evidence="1">Homodimer. Forms a heterotetramer composed of two aldolase (HsaF) and two dehydrogenase (HsaG) subunits.</text>
</comment>
<comment type="similarity">
    <text evidence="2">Belongs to the 4-hydroxy-2-oxovalerate aldolase family.</text>
</comment>
<feature type="chain" id="PRO_0000387847" description="4-hydroxy-2-oxohexanoate aldolase">
    <location>
        <begin position="1"/>
        <end position="346"/>
    </location>
</feature>
<feature type="domain" description="Pyruvate carboxyltransferase" evidence="2">
    <location>
        <begin position="7"/>
        <end position="259"/>
    </location>
</feature>
<feature type="active site" description="Proton acceptor" evidence="2">
    <location>
        <position position="19"/>
    </location>
</feature>
<feature type="binding site" evidence="2">
    <location>
        <begin position="15"/>
        <end position="16"/>
    </location>
    <ligand>
        <name>substrate</name>
    </ligand>
</feature>
<feature type="binding site" evidence="2">
    <location>
        <position position="16"/>
    </location>
    <ligand>
        <name>Mn(2+)</name>
        <dbReference type="ChEBI" id="CHEBI:29035"/>
    </ligand>
</feature>
<feature type="binding site" evidence="2">
    <location>
        <position position="169"/>
    </location>
    <ligand>
        <name>substrate</name>
    </ligand>
</feature>
<feature type="binding site" evidence="2">
    <location>
        <position position="198"/>
    </location>
    <ligand>
        <name>Mn(2+)</name>
        <dbReference type="ChEBI" id="CHEBI:29035"/>
    </ligand>
</feature>
<feature type="binding site" evidence="2">
    <location>
        <position position="198"/>
    </location>
    <ligand>
        <name>substrate</name>
    </ligand>
</feature>
<feature type="binding site" evidence="2">
    <location>
        <position position="200"/>
    </location>
    <ligand>
        <name>Mn(2+)</name>
        <dbReference type="ChEBI" id="CHEBI:29035"/>
    </ligand>
</feature>
<feature type="binding site" evidence="2">
    <location>
        <position position="289"/>
    </location>
    <ligand>
        <name>substrate</name>
    </ligand>
</feature>
<feature type="site" description="Transition state stabilizer" evidence="2">
    <location>
        <position position="15"/>
    </location>
</feature>
<accession>Q7TW97</accession>
<accession>A0A1R3Y4G7</accession>
<accession>X2BNP9</accession>
<sequence length="346" mass="36442">MTDMWDVRITDTSLRDGSHHKRHQFTKDEVGAIVAALDAAGVPVIEVTHGDGLGGSSFNYGFSKTPEQELIKLAAATAKEARIAFLMLPGVGTKDDIKEARDNGGSICRIATHCTEADVSIQHFGLARELGLETVGFLMMAHTIAPEKLAAQARIMADAGCQCVYVVDSAGALVLDGVADRVSALVAELGEDAQVGFHGHENLGLGVANSVAAVRAGAKQIDGSCRRFGAGAGNAPVEALIGVFDKIGVKTGIDFFDIADAAEDVVRPAMPAECLLDRNALIMGYSGVYSSFLKHAVRQAERYGVPASALLHRAGQRKLIGGQEDQLIDIALEIKRELDSGAAVTH</sequence>
<keyword id="KW-0058">Aromatic hydrocarbons catabolism</keyword>
<keyword id="KW-0456">Lyase</keyword>
<keyword id="KW-0464">Manganese</keyword>
<keyword id="KW-0479">Metal-binding</keyword>
<keyword id="KW-1185">Reference proteome</keyword>
<reference key="1">
    <citation type="journal article" date="2003" name="Proc. Natl. Acad. Sci. U.S.A.">
        <title>The complete genome sequence of Mycobacterium bovis.</title>
        <authorList>
            <person name="Garnier T."/>
            <person name="Eiglmeier K."/>
            <person name="Camus J.-C."/>
            <person name="Medina N."/>
            <person name="Mansoor H."/>
            <person name="Pryor M."/>
            <person name="Duthoy S."/>
            <person name="Grondin S."/>
            <person name="Lacroix C."/>
            <person name="Monsempe C."/>
            <person name="Simon S."/>
            <person name="Harris B."/>
            <person name="Atkin R."/>
            <person name="Doggett J."/>
            <person name="Mayes R."/>
            <person name="Keating L."/>
            <person name="Wheeler P.R."/>
            <person name="Parkhill J."/>
            <person name="Barrell B.G."/>
            <person name="Cole S.T."/>
            <person name="Gordon S.V."/>
            <person name="Hewinson R.G."/>
        </authorList>
    </citation>
    <scope>NUCLEOTIDE SEQUENCE [LARGE SCALE GENOMIC DNA]</scope>
    <source>
        <strain>ATCC BAA-935 / AF2122/97</strain>
    </source>
</reference>
<reference key="2">
    <citation type="journal article" date="2017" name="Genome Announc.">
        <title>Updated reference genome sequence and annotation of Mycobacterium bovis AF2122/97.</title>
        <authorList>
            <person name="Malone K.M."/>
            <person name="Farrell D."/>
            <person name="Stuber T.P."/>
            <person name="Schubert O.T."/>
            <person name="Aebersold R."/>
            <person name="Robbe-Austerman S."/>
            <person name="Gordon S.V."/>
        </authorList>
    </citation>
    <scope>NUCLEOTIDE SEQUENCE [LARGE SCALE GENOMIC DNA]</scope>
    <scope>GENOME REANNOTATION</scope>
    <source>
        <strain>ATCC BAA-935 / AF2122/97</strain>
    </source>
</reference>
<name>HOA_MYCBO</name>
<organism>
    <name type="scientific">Mycobacterium bovis (strain ATCC BAA-935 / AF2122/97)</name>
    <dbReference type="NCBI Taxonomy" id="233413"/>
    <lineage>
        <taxon>Bacteria</taxon>
        <taxon>Bacillati</taxon>
        <taxon>Actinomycetota</taxon>
        <taxon>Actinomycetes</taxon>
        <taxon>Mycobacteriales</taxon>
        <taxon>Mycobacteriaceae</taxon>
        <taxon>Mycobacterium</taxon>
        <taxon>Mycobacterium tuberculosis complex</taxon>
    </lineage>
</organism>
<dbReference type="EC" id="4.1.3.43" evidence="1"/>
<dbReference type="EC" id="4.1.3.39" evidence="2"/>
<dbReference type="EMBL" id="LT708304">
    <property type="protein sequence ID" value="SIU02191.1"/>
    <property type="molecule type" value="Genomic_DNA"/>
</dbReference>
<dbReference type="RefSeq" id="NP_857203.1">
    <property type="nucleotide sequence ID" value="NC_002945.3"/>
</dbReference>
<dbReference type="SMR" id="Q7TW97"/>
<dbReference type="KEGG" id="mbo:BQ2027_MB3564C"/>
<dbReference type="PATRIC" id="fig|233413.5.peg.3907"/>
<dbReference type="Proteomes" id="UP000001419">
    <property type="component" value="Chromosome"/>
</dbReference>
<dbReference type="GO" id="GO:0003852">
    <property type="term" value="F:2-isopropylmalate synthase activity"/>
    <property type="evidence" value="ECO:0007669"/>
    <property type="project" value="TreeGrafter"/>
</dbReference>
<dbReference type="GO" id="GO:0008701">
    <property type="term" value="F:4-hydroxy-2-oxovalerate aldolase activity"/>
    <property type="evidence" value="ECO:0007669"/>
    <property type="project" value="UniProtKB-UniRule"/>
</dbReference>
<dbReference type="GO" id="GO:0030145">
    <property type="term" value="F:manganese ion binding"/>
    <property type="evidence" value="ECO:0007669"/>
    <property type="project" value="UniProtKB-UniRule"/>
</dbReference>
<dbReference type="GO" id="GO:0009056">
    <property type="term" value="P:catabolic process"/>
    <property type="evidence" value="ECO:0007669"/>
    <property type="project" value="UniProtKB-KW"/>
</dbReference>
<dbReference type="GO" id="GO:0009098">
    <property type="term" value="P:L-leucine biosynthetic process"/>
    <property type="evidence" value="ECO:0007669"/>
    <property type="project" value="TreeGrafter"/>
</dbReference>
<dbReference type="CDD" id="cd07943">
    <property type="entry name" value="DRE_TIM_HOA"/>
    <property type="match status" value="1"/>
</dbReference>
<dbReference type="FunFam" id="1.10.8.60:FF:000042">
    <property type="entry name" value="4-hydroxy-2-oxovalerate aldolase"/>
    <property type="match status" value="1"/>
</dbReference>
<dbReference type="FunFam" id="3.20.20.70:FF:000072">
    <property type="entry name" value="4-hydroxy-2-oxovalerate aldolase"/>
    <property type="match status" value="1"/>
</dbReference>
<dbReference type="Gene3D" id="1.10.8.60">
    <property type="match status" value="1"/>
</dbReference>
<dbReference type="Gene3D" id="3.20.20.70">
    <property type="entry name" value="Aldolase class I"/>
    <property type="match status" value="1"/>
</dbReference>
<dbReference type="HAMAP" id="MF_01656">
    <property type="entry name" value="HOA"/>
    <property type="match status" value="1"/>
</dbReference>
<dbReference type="InterPro" id="IPR050073">
    <property type="entry name" value="2-IPM_HCS-like"/>
</dbReference>
<dbReference type="InterPro" id="IPR017629">
    <property type="entry name" value="4OH_2_O-val_aldolase"/>
</dbReference>
<dbReference type="InterPro" id="IPR013785">
    <property type="entry name" value="Aldolase_TIM"/>
</dbReference>
<dbReference type="InterPro" id="IPR012425">
    <property type="entry name" value="DmpG_comm"/>
</dbReference>
<dbReference type="InterPro" id="IPR035685">
    <property type="entry name" value="DRE_TIM_HOA"/>
</dbReference>
<dbReference type="InterPro" id="IPR000891">
    <property type="entry name" value="PYR_CT"/>
</dbReference>
<dbReference type="NCBIfam" id="TIGR03217">
    <property type="entry name" value="4OH_2_O_val_ald"/>
    <property type="match status" value="1"/>
</dbReference>
<dbReference type="NCBIfam" id="NF006049">
    <property type="entry name" value="PRK08195.1"/>
    <property type="match status" value="1"/>
</dbReference>
<dbReference type="PANTHER" id="PTHR10277:SF9">
    <property type="entry name" value="2-ISOPROPYLMALATE SYNTHASE 1, CHLOROPLASTIC-RELATED"/>
    <property type="match status" value="1"/>
</dbReference>
<dbReference type="PANTHER" id="PTHR10277">
    <property type="entry name" value="HOMOCITRATE SYNTHASE-RELATED"/>
    <property type="match status" value="1"/>
</dbReference>
<dbReference type="Pfam" id="PF07836">
    <property type="entry name" value="DmpG_comm"/>
    <property type="match status" value="1"/>
</dbReference>
<dbReference type="Pfam" id="PF00682">
    <property type="entry name" value="HMGL-like"/>
    <property type="match status" value="1"/>
</dbReference>
<dbReference type="SUPFAM" id="SSF51569">
    <property type="entry name" value="Aldolase"/>
    <property type="match status" value="1"/>
</dbReference>
<dbReference type="SUPFAM" id="SSF89000">
    <property type="entry name" value="post-HMGL domain-like"/>
    <property type="match status" value="1"/>
</dbReference>
<dbReference type="PROSITE" id="PS50991">
    <property type="entry name" value="PYR_CT"/>
    <property type="match status" value="1"/>
</dbReference>
<protein>
    <recommendedName>
        <fullName evidence="1">4-hydroxy-2-oxohexanoate aldolase</fullName>
        <ecNumber evidence="1">4.1.3.43</ecNumber>
    </recommendedName>
    <alternativeName>
        <fullName evidence="2">4-hydroxy-2-keto-pentanoic acid aldolase</fullName>
    </alternativeName>
    <alternativeName>
        <fullName evidence="2">4-hydroxy-2-oxopentanoate aldolase</fullName>
    </alternativeName>
    <alternativeName>
        <fullName evidence="2">4-hydroxy-2-oxovalerate aldolase</fullName>
        <shortName evidence="2">HOA</shortName>
        <ecNumber evidence="2">4.1.3.39</ecNumber>
    </alternativeName>
</protein>
<proteinExistence type="inferred from homology"/>